<proteinExistence type="inferred from homology"/>
<keyword id="KW-1185">Reference proteome</keyword>
<keyword id="KW-0687">Ribonucleoprotein</keyword>
<keyword id="KW-0689">Ribosomal protein</keyword>
<gene>
    <name evidence="1" type="primary">rplS</name>
    <name type="ordered locus">Mmar10_2899</name>
</gene>
<feature type="chain" id="PRO_1000049696" description="Large ribosomal subunit protein bL19">
    <location>
        <begin position="1"/>
        <end position="132"/>
    </location>
</feature>
<sequence length="132" mass="15159">MNMIEQLEQEEAARVLGEKTIPDFSAGDTLRVHVRIKEGERERIQVFEGVCIARNGGGLNESYTVRKISFGEGVERVFPLYSPNVEQIEIKRKGKVRRAKLYYLRDRRGKSARIAERVTGRGIEKREPKKKG</sequence>
<reference key="1">
    <citation type="submission" date="2006-08" db="EMBL/GenBank/DDBJ databases">
        <title>Complete sequence of Maricaulis maris MCS10.</title>
        <authorList>
            <consortium name="US DOE Joint Genome Institute"/>
            <person name="Copeland A."/>
            <person name="Lucas S."/>
            <person name="Lapidus A."/>
            <person name="Barry K."/>
            <person name="Detter J.C."/>
            <person name="Glavina del Rio T."/>
            <person name="Hammon N."/>
            <person name="Israni S."/>
            <person name="Dalin E."/>
            <person name="Tice H."/>
            <person name="Pitluck S."/>
            <person name="Saunders E."/>
            <person name="Brettin T."/>
            <person name="Bruce D."/>
            <person name="Han C."/>
            <person name="Tapia R."/>
            <person name="Gilna P."/>
            <person name="Schmutz J."/>
            <person name="Larimer F."/>
            <person name="Land M."/>
            <person name="Hauser L."/>
            <person name="Kyrpides N."/>
            <person name="Mikhailova N."/>
            <person name="Viollier P."/>
            <person name="Stephens C."/>
            <person name="Richardson P."/>
        </authorList>
    </citation>
    <scope>NUCLEOTIDE SEQUENCE [LARGE SCALE GENOMIC DNA]</scope>
    <source>
        <strain>MCS10</strain>
    </source>
</reference>
<dbReference type="EMBL" id="CP000449">
    <property type="protein sequence ID" value="ABI67180.1"/>
    <property type="molecule type" value="Genomic_DNA"/>
</dbReference>
<dbReference type="RefSeq" id="WP_011644824.1">
    <property type="nucleotide sequence ID" value="NC_008347.1"/>
</dbReference>
<dbReference type="SMR" id="Q0AKL3"/>
<dbReference type="STRING" id="394221.Mmar10_2899"/>
<dbReference type="KEGG" id="mmr:Mmar10_2899"/>
<dbReference type="eggNOG" id="COG0335">
    <property type="taxonomic scope" value="Bacteria"/>
</dbReference>
<dbReference type="HOGENOM" id="CLU_103507_2_1_5"/>
<dbReference type="OrthoDB" id="9803541at2"/>
<dbReference type="Proteomes" id="UP000001964">
    <property type="component" value="Chromosome"/>
</dbReference>
<dbReference type="GO" id="GO:0022625">
    <property type="term" value="C:cytosolic large ribosomal subunit"/>
    <property type="evidence" value="ECO:0007669"/>
    <property type="project" value="TreeGrafter"/>
</dbReference>
<dbReference type="GO" id="GO:0003735">
    <property type="term" value="F:structural constituent of ribosome"/>
    <property type="evidence" value="ECO:0007669"/>
    <property type="project" value="InterPro"/>
</dbReference>
<dbReference type="GO" id="GO:0006412">
    <property type="term" value="P:translation"/>
    <property type="evidence" value="ECO:0007669"/>
    <property type="project" value="UniProtKB-UniRule"/>
</dbReference>
<dbReference type="FunFam" id="2.30.30.790:FF:000001">
    <property type="entry name" value="50S ribosomal protein L19"/>
    <property type="match status" value="1"/>
</dbReference>
<dbReference type="Gene3D" id="2.30.30.790">
    <property type="match status" value="1"/>
</dbReference>
<dbReference type="HAMAP" id="MF_00402">
    <property type="entry name" value="Ribosomal_bL19"/>
    <property type="match status" value="1"/>
</dbReference>
<dbReference type="InterPro" id="IPR001857">
    <property type="entry name" value="Ribosomal_bL19"/>
</dbReference>
<dbReference type="InterPro" id="IPR018257">
    <property type="entry name" value="Ribosomal_bL19_CS"/>
</dbReference>
<dbReference type="InterPro" id="IPR038657">
    <property type="entry name" value="Ribosomal_bL19_sf"/>
</dbReference>
<dbReference type="InterPro" id="IPR008991">
    <property type="entry name" value="Translation_prot_SH3-like_sf"/>
</dbReference>
<dbReference type="NCBIfam" id="TIGR01024">
    <property type="entry name" value="rplS_bact"/>
    <property type="match status" value="1"/>
</dbReference>
<dbReference type="PANTHER" id="PTHR15680:SF9">
    <property type="entry name" value="LARGE RIBOSOMAL SUBUNIT PROTEIN BL19M"/>
    <property type="match status" value="1"/>
</dbReference>
<dbReference type="PANTHER" id="PTHR15680">
    <property type="entry name" value="RIBOSOMAL PROTEIN L19"/>
    <property type="match status" value="1"/>
</dbReference>
<dbReference type="Pfam" id="PF01245">
    <property type="entry name" value="Ribosomal_L19"/>
    <property type="match status" value="1"/>
</dbReference>
<dbReference type="PIRSF" id="PIRSF002191">
    <property type="entry name" value="Ribosomal_L19"/>
    <property type="match status" value="1"/>
</dbReference>
<dbReference type="PRINTS" id="PR00061">
    <property type="entry name" value="RIBOSOMALL19"/>
</dbReference>
<dbReference type="SUPFAM" id="SSF50104">
    <property type="entry name" value="Translation proteins SH3-like domain"/>
    <property type="match status" value="1"/>
</dbReference>
<dbReference type="PROSITE" id="PS01015">
    <property type="entry name" value="RIBOSOMAL_L19"/>
    <property type="match status" value="1"/>
</dbReference>
<comment type="function">
    <text evidence="1">This protein is located at the 30S-50S ribosomal subunit interface and may play a role in the structure and function of the aminoacyl-tRNA binding site.</text>
</comment>
<comment type="similarity">
    <text evidence="1">Belongs to the bacterial ribosomal protein bL19 family.</text>
</comment>
<accession>Q0AKL3</accession>
<name>RL19_MARMM</name>
<protein>
    <recommendedName>
        <fullName evidence="1">Large ribosomal subunit protein bL19</fullName>
    </recommendedName>
    <alternativeName>
        <fullName evidence="2">50S ribosomal protein L19</fullName>
    </alternativeName>
</protein>
<organism>
    <name type="scientific">Maricaulis maris (strain MCS10)</name>
    <name type="common">Caulobacter maris</name>
    <dbReference type="NCBI Taxonomy" id="394221"/>
    <lineage>
        <taxon>Bacteria</taxon>
        <taxon>Pseudomonadati</taxon>
        <taxon>Pseudomonadota</taxon>
        <taxon>Alphaproteobacteria</taxon>
        <taxon>Maricaulales</taxon>
        <taxon>Maricaulaceae</taxon>
        <taxon>Maricaulis</taxon>
    </lineage>
</organism>
<evidence type="ECO:0000255" key="1">
    <source>
        <dbReference type="HAMAP-Rule" id="MF_00402"/>
    </source>
</evidence>
<evidence type="ECO:0000305" key="2"/>